<sequence length="138" mass="15174">MPTINQLVRQGRKSISTKSDSPALNFGYNSKKKSLTNNPAPQKRGVATRVGTMTPKKPNSALRKYARVRLSNLIEVTAYIPGIGHNLQEHSVVLIRGGRVKDLPGVRYHIVRGALDTAGVDGRMQGRSKYGAKRPKKK</sequence>
<dbReference type="EMBL" id="CP000423">
    <property type="protein sequence ID" value="ABJ71246.1"/>
    <property type="molecule type" value="Genomic_DNA"/>
</dbReference>
<dbReference type="RefSeq" id="WP_003567580.1">
    <property type="nucleotide sequence ID" value="NC_008526.1"/>
</dbReference>
<dbReference type="RefSeq" id="YP_807688.1">
    <property type="nucleotide sequence ID" value="NC_008526.1"/>
</dbReference>
<dbReference type="SMR" id="Q034X6"/>
<dbReference type="STRING" id="321967.LSEI_2510"/>
<dbReference type="PaxDb" id="321967-LSEI_2510"/>
<dbReference type="GeneID" id="57091089"/>
<dbReference type="KEGG" id="lca:LSEI_2510"/>
<dbReference type="PATRIC" id="fig|321967.11.peg.2464"/>
<dbReference type="HOGENOM" id="CLU_104295_1_2_9"/>
<dbReference type="Proteomes" id="UP000001651">
    <property type="component" value="Chromosome"/>
</dbReference>
<dbReference type="GO" id="GO:0015935">
    <property type="term" value="C:small ribosomal subunit"/>
    <property type="evidence" value="ECO:0007669"/>
    <property type="project" value="InterPro"/>
</dbReference>
<dbReference type="GO" id="GO:0019843">
    <property type="term" value="F:rRNA binding"/>
    <property type="evidence" value="ECO:0007669"/>
    <property type="project" value="UniProtKB-UniRule"/>
</dbReference>
<dbReference type="GO" id="GO:0003735">
    <property type="term" value="F:structural constituent of ribosome"/>
    <property type="evidence" value="ECO:0007669"/>
    <property type="project" value="InterPro"/>
</dbReference>
<dbReference type="GO" id="GO:0000049">
    <property type="term" value="F:tRNA binding"/>
    <property type="evidence" value="ECO:0007669"/>
    <property type="project" value="UniProtKB-UniRule"/>
</dbReference>
<dbReference type="GO" id="GO:0006412">
    <property type="term" value="P:translation"/>
    <property type="evidence" value="ECO:0007669"/>
    <property type="project" value="UniProtKB-UniRule"/>
</dbReference>
<dbReference type="CDD" id="cd03368">
    <property type="entry name" value="Ribosomal_S12"/>
    <property type="match status" value="1"/>
</dbReference>
<dbReference type="FunFam" id="2.40.50.140:FF:000001">
    <property type="entry name" value="30S ribosomal protein S12"/>
    <property type="match status" value="1"/>
</dbReference>
<dbReference type="Gene3D" id="2.40.50.140">
    <property type="entry name" value="Nucleic acid-binding proteins"/>
    <property type="match status" value="1"/>
</dbReference>
<dbReference type="HAMAP" id="MF_00403_B">
    <property type="entry name" value="Ribosomal_uS12_B"/>
    <property type="match status" value="1"/>
</dbReference>
<dbReference type="InterPro" id="IPR012340">
    <property type="entry name" value="NA-bd_OB-fold"/>
</dbReference>
<dbReference type="InterPro" id="IPR006032">
    <property type="entry name" value="Ribosomal_uS12"/>
</dbReference>
<dbReference type="InterPro" id="IPR005679">
    <property type="entry name" value="Ribosomal_uS12_bac"/>
</dbReference>
<dbReference type="NCBIfam" id="TIGR00981">
    <property type="entry name" value="rpsL_bact"/>
    <property type="match status" value="1"/>
</dbReference>
<dbReference type="PANTHER" id="PTHR11652">
    <property type="entry name" value="30S RIBOSOMAL PROTEIN S12 FAMILY MEMBER"/>
    <property type="match status" value="1"/>
</dbReference>
<dbReference type="Pfam" id="PF00164">
    <property type="entry name" value="Ribosom_S12_S23"/>
    <property type="match status" value="1"/>
</dbReference>
<dbReference type="PRINTS" id="PR01034">
    <property type="entry name" value="RIBOSOMALS12"/>
</dbReference>
<dbReference type="SUPFAM" id="SSF50249">
    <property type="entry name" value="Nucleic acid-binding proteins"/>
    <property type="match status" value="1"/>
</dbReference>
<dbReference type="PROSITE" id="PS00055">
    <property type="entry name" value="RIBOSOMAL_S12"/>
    <property type="match status" value="1"/>
</dbReference>
<protein>
    <recommendedName>
        <fullName evidence="2">Small ribosomal subunit protein uS12</fullName>
    </recommendedName>
    <alternativeName>
        <fullName evidence="4">30S ribosomal protein S12</fullName>
    </alternativeName>
</protein>
<comment type="function">
    <text evidence="2">With S4 and S5 plays an important role in translational accuracy.</text>
</comment>
<comment type="function">
    <text evidence="2">Interacts with and stabilizes bases of the 16S rRNA that are involved in tRNA selection in the A site and with the mRNA backbone. Located at the interface of the 30S and 50S subunits, it traverses the body of the 30S subunit contacting proteins on the other side and probably holding the rRNA structure together. The combined cluster of proteins S8, S12 and S17 appears to hold together the shoulder and platform of the 30S subunit.</text>
</comment>
<comment type="subunit">
    <text evidence="2">Part of the 30S ribosomal subunit. Contacts proteins S8 and S17. May interact with IF1 in the 30S initiation complex.</text>
</comment>
<comment type="similarity">
    <text evidence="2">Belongs to the universal ribosomal protein uS12 family.</text>
</comment>
<name>RS12_LACP3</name>
<organism>
    <name type="scientific">Lacticaseibacillus paracasei (strain ATCC 334 / BCRC 17002 / CCUG 31169 / CIP 107868 / KCTC 3260 / NRRL B-441)</name>
    <name type="common">Lactobacillus paracasei</name>
    <dbReference type="NCBI Taxonomy" id="321967"/>
    <lineage>
        <taxon>Bacteria</taxon>
        <taxon>Bacillati</taxon>
        <taxon>Bacillota</taxon>
        <taxon>Bacilli</taxon>
        <taxon>Lactobacillales</taxon>
        <taxon>Lactobacillaceae</taxon>
        <taxon>Lacticaseibacillus</taxon>
    </lineage>
</organism>
<gene>
    <name evidence="2" type="primary">rpsL</name>
    <name type="ordered locus">LSEI_2510</name>
</gene>
<feature type="chain" id="PRO_0000295987" description="Small ribosomal subunit protein uS12">
    <location>
        <begin position="1"/>
        <end position="138"/>
    </location>
</feature>
<feature type="region of interest" description="Disordered" evidence="3">
    <location>
        <begin position="1"/>
        <end position="45"/>
    </location>
</feature>
<feature type="compositionally biased region" description="Polar residues" evidence="3">
    <location>
        <begin position="1"/>
        <end position="22"/>
    </location>
</feature>
<feature type="modified residue" description="3-methylthioaspartic acid" evidence="1">
    <location>
        <position position="102"/>
    </location>
</feature>
<accession>Q034X6</accession>
<evidence type="ECO:0000250" key="1"/>
<evidence type="ECO:0000255" key="2">
    <source>
        <dbReference type="HAMAP-Rule" id="MF_00403"/>
    </source>
</evidence>
<evidence type="ECO:0000256" key="3">
    <source>
        <dbReference type="SAM" id="MobiDB-lite"/>
    </source>
</evidence>
<evidence type="ECO:0000305" key="4"/>
<proteinExistence type="inferred from homology"/>
<keyword id="KW-0488">Methylation</keyword>
<keyword id="KW-1185">Reference proteome</keyword>
<keyword id="KW-0687">Ribonucleoprotein</keyword>
<keyword id="KW-0689">Ribosomal protein</keyword>
<keyword id="KW-0694">RNA-binding</keyword>
<keyword id="KW-0699">rRNA-binding</keyword>
<keyword id="KW-0820">tRNA-binding</keyword>
<reference key="1">
    <citation type="journal article" date="2006" name="Proc. Natl. Acad. Sci. U.S.A.">
        <title>Comparative genomics of the lactic acid bacteria.</title>
        <authorList>
            <person name="Makarova K.S."/>
            <person name="Slesarev A."/>
            <person name="Wolf Y.I."/>
            <person name="Sorokin A."/>
            <person name="Mirkin B."/>
            <person name="Koonin E.V."/>
            <person name="Pavlov A."/>
            <person name="Pavlova N."/>
            <person name="Karamychev V."/>
            <person name="Polouchine N."/>
            <person name="Shakhova V."/>
            <person name="Grigoriev I."/>
            <person name="Lou Y."/>
            <person name="Rohksar D."/>
            <person name="Lucas S."/>
            <person name="Huang K."/>
            <person name="Goodstein D.M."/>
            <person name="Hawkins T."/>
            <person name="Plengvidhya V."/>
            <person name="Welker D."/>
            <person name="Hughes J."/>
            <person name="Goh Y."/>
            <person name="Benson A."/>
            <person name="Baldwin K."/>
            <person name="Lee J.-H."/>
            <person name="Diaz-Muniz I."/>
            <person name="Dosti B."/>
            <person name="Smeianov V."/>
            <person name="Wechter W."/>
            <person name="Barabote R."/>
            <person name="Lorca G."/>
            <person name="Altermann E."/>
            <person name="Barrangou R."/>
            <person name="Ganesan B."/>
            <person name="Xie Y."/>
            <person name="Rawsthorne H."/>
            <person name="Tamir D."/>
            <person name="Parker C."/>
            <person name="Breidt F."/>
            <person name="Broadbent J.R."/>
            <person name="Hutkins R."/>
            <person name="O'Sullivan D."/>
            <person name="Steele J."/>
            <person name="Unlu G."/>
            <person name="Saier M.H. Jr."/>
            <person name="Klaenhammer T."/>
            <person name="Richardson P."/>
            <person name="Kozyavkin S."/>
            <person name="Weimer B.C."/>
            <person name="Mills D.A."/>
        </authorList>
    </citation>
    <scope>NUCLEOTIDE SEQUENCE [LARGE SCALE GENOMIC DNA]</scope>
    <source>
        <strain>ATCC 334 / BCRC 17002 / CCUG 31169 / CIP 107868 / KCTC 3260 / NRRL B-441</strain>
    </source>
</reference>